<name>PSAC_CUSOB</name>
<sequence length="81" mass="8829">MSHSVKVYDTCIGCTQCVRACPTDVLEMIPWDGCKAKQIASAPRTEDCVGCKRCESACPTDFLSVRVYLGAETTRSMGLAY</sequence>
<feature type="chain" id="PRO_0000322037" description="Photosystem I iron-sulfur center">
    <location>
        <begin position="1"/>
        <end position="81"/>
    </location>
</feature>
<feature type="domain" description="4Fe-4S ferredoxin-type 1" evidence="2">
    <location>
        <begin position="2"/>
        <end position="31"/>
    </location>
</feature>
<feature type="domain" description="4Fe-4S ferredoxin-type 2" evidence="2">
    <location>
        <begin position="39"/>
        <end position="68"/>
    </location>
</feature>
<feature type="binding site" evidence="2">
    <location>
        <position position="11"/>
    </location>
    <ligand>
        <name>[4Fe-4S] cluster</name>
        <dbReference type="ChEBI" id="CHEBI:49883"/>
        <label>1</label>
    </ligand>
</feature>
<feature type="binding site" evidence="2">
    <location>
        <position position="14"/>
    </location>
    <ligand>
        <name>[4Fe-4S] cluster</name>
        <dbReference type="ChEBI" id="CHEBI:49883"/>
        <label>1</label>
    </ligand>
</feature>
<feature type="binding site" evidence="2">
    <location>
        <position position="17"/>
    </location>
    <ligand>
        <name>[4Fe-4S] cluster</name>
        <dbReference type="ChEBI" id="CHEBI:49883"/>
        <label>1</label>
    </ligand>
</feature>
<feature type="binding site" evidence="2">
    <location>
        <position position="21"/>
    </location>
    <ligand>
        <name>[4Fe-4S] cluster</name>
        <dbReference type="ChEBI" id="CHEBI:49883"/>
        <label>2</label>
    </ligand>
</feature>
<feature type="binding site" evidence="2">
    <location>
        <position position="48"/>
    </location>
    <ligand>
        <name>[4Fe-4S] cluster</name>
        <dbReference type="ChEBI" id="CHEBI:49883"/>
        <label>2</label>
    </ligand>
</feature>
<feature type="binding site" evidence="2">
    <location>
        <position position="51"/>
    </location>
    <ligand>
        <name>[4Fe-4S] cluster</name>
        <dbReference type="ChEBI" id="CHEBI:49883"/>
        <label>2</label>
    </ligand>
</feature>
<feature type="binding site" evidence="2">
    <location>
        <position position="54"/>
    </location>
    <ligand>
        <name>[4Fe-4S] cluster</name>
        <dbReference type="ChEBI" id="CHEBI:49883"/>
        <label>2</label>
    </ligand>
</feature>
<feature type="binding site" evidence="2">
    <location>
        <position position="58"/>
    </location>
    <ligand>
        <name>[4Fe-4S] cluster</name>
        <dbReference type="ChEBI" id="CHEBI:49883"/>
        <label>1</label>
    </ligand>
</feature>
<keyword id="KW-0004">4Fe-4S</keyword>
<keyword id="KW-0249">Electron transport</keyword>
<keyword id="KW-0408">Iron</keyword>
<keyword id="KW-0411">Iron-sulfur</keyword>
<keyword id="KW-0472">Membrane</keyword>
<keyword id="KW-0479">Metal-binding</keyword>
<keyword id="KW-0560">Oxidoreductase</keyword>
<keyword id="KW-0602">Photosynthesis</keyword>
<keyword id="KW-0603">Photosystem I</keyword>
<keyword id="KW-0934">Plastid</keyword>
<keyword id="KW-0677">Repeat</keyword>
<keyword id="KW-0793">Thylakoid</keyword>
<keyword id="KW-0813">Transport</keyword>
<protein>
    <recommendedName>
        <fullName evidence="2">Photosystem I iron-sulfur center</fullName>
        <ecNumber evidence="2">1.97.1.12</ecNumber>
    </recommendedName>
    <alternativeName>
        <fullName evidence="2">9 kDa polypeptide</fullName>
    </alternativeName>
    <alternativeName>
        <fullName evidence="2">PSI-C</fullName>
    </alternativeName>
    <alternativeName>
        <fullName evidence="2">Photosystem I subunit VII</fullName>
    </alternativeName>
    <alternativeName>
        <fullName evidence="2">PsaC</fullName>
    </alternativeName>
</protein>
<proteinExistence type="inferred from homology"/>
<reference key="1">
    <citation type="journal article" date="2007" name="BMC Plant Biol.">
        <title>Complete plastid genome sequences suggest strong selection for retention of photosynthetic genes in the parasitic plant genus Cuscuta.</title>
        <authorList>
            <person name="McNeal J.R."/>
            <person name="Kuehl J.V."/>
            <person name="Boore J.L."/>
            <person name="dePamphilis C.W."/>
        </authorList>
    </citation>
    <scope>NUCLEOTIDE SEQUENCE [LARGE SCALE GENOMIC DNA]</scope>
</reference>
<accession>A8W3M8</accession>
<geneLocation type="plastid"/>
<evidence type="ECO:0000250" key="1"/>
<evidence type="ECO:0000255" key="2">
    <source>
        <dbReference type="HAMAP-Rule" id="MF_01303"/>
    </source>
</evidence>
<evidence type="ECO:0000305" key="3"/>
<gene>
    <name evidence="2" type="primary">psaC</name>
</gene>
<dbReference type="EC" id="1.97.1.12" evidence="2"/>
<dbReference type="EMBL" id="EU189133">
    <property type="protein sequence ID" value="ABW20603.1"/>
    <property type="molecule type" value="Genomic_DNA"/>
</dbReference>
<dbReference type="RefSeq" id="YP_001531258.1">
    <property type="nucleotide sequence ID" value="NC_009949.1"/>
</dbReference>
<dbReference type="SMR" id="A8W3M8"/>
<dbReference type="GeneID" id="5714770"/>
<dbReference type="GO" id="GO:0009534">
    <property type="term" value="C:chloroplast thylakoid"/>
    <property type="evidence" value="ECO:0007669"/>
    <property type="project" value="TreeGrafter"/>
</dbReference>
<dbReference type="GO" id="GO:0009522">
    <property type="term" value="C:photosystem I"/>
    <property type="evidence" value="ECO:0007669"/>
    <property type="project" value="UniProtKB-KW"/>
</dbReference>
<dbReference type="GO" id="GO:0055035">
    <property type="term" value="C:plastid thylakoid membrane"/>
    <property type="evidence" value="ECO:0007669"/>
    <property type="project" value="UniProtKB-SubCell"/>
</dbReference>
<dbReference type="GO" id="GO:0051539">
    <property type="term" value="F:4 iron, 4 sulfur cluster binding"/>
    <property type="evidence" value="ECO:0007669"/>
    <property type="project" value="UniProtKB-KW"/>
</dbReference>
<dbReference type="GO" id="GO:0009055">
    <property type="term" value="F:electron transfer activity"/>
    <property type="evidence" value="ECO:0007669"/>
    <property type="project" value="UniProtKB-UniRule"/>
</dbReference>
<dbReference type="GO" id="GO:0046872">
    <property type="term" value="F:metal ion binding"/>
    <property type="evidence" value="ECO:0007669"/>
    <property type="project" value="UniProtKB-KW"/>
</dbReference>
<dbReference type="GO" id="GO:0016491">
    <property type="term" value="F:oxidoreductase activity"/>
    <property type="evidence" value="ECO:0007669"/>
    <property type="project" value="UniProtKB-KW"/>
</dbReference>
<dbReference type="GO" id="GO:0009773">
    <property type="term" value="P:photosynthetic electron transport in photosystem I"/>
    <property type="evidence" value="ECO:0007669"/>
    <property type="project" value="InterPro"/>
</dbReference>
<dbReference type="FunFam" id="3.30.70.20:FF:000001">
    <property type="entry name" value="Photosystem I iron-sulfur center"/>
    <property type="match status" value="1"/>
</dbReference>
<dbReference type="Gene3D" id="3.30.70.20">
    <property type="match status" value="1"/>
</dbReference>
<dbReference type="HAMAP" id="MF_01303">
    <property type="entry name" value="PSI_PsaC"/>
    <property type="match status" value="1"/>
</dbReference>
<dbReference type="InterPro" id="IPR017896">
    <property type="entry name" value="4Fe4S_Fe-S-bd"/>
</dbReference>
<dbReference type="InterPro" id="IPR017900">
    <property type="entry name" value="4Fe4S_Fe_S_CS"/>
</dbReference>
<dbReference type="InterPro" id="IPR050157">
    <property type="entry name" value="PSI_iron-sulfur_center"/>
</dbReference>
<dbReference type="InterPro" id="IPR017491">
    <property type="entry name" value="PSI_PsaC"/>
</dbReference>
<dbReference type="NCBIfam" id="TIGR03048">
    <property type="entry name" value="PS_I_psaC"/>
    <property type="match status" value="1"/>
</dbReference>
<dbReference type="PANTHER" id="PTHR24960:SF79">
    <property type="entry name" value="PHOTOSYSTEM I IRON-SULFUR CENTER"/>
    <property type="match status" value="1"/>
</dbReference>
<dbReference type="PANTHER" id="PTHR24960">
    <property type="entry name" value="PHOTOSYSTEM I IRON-SULFUR CENTER-RELATED"/>
    <property type="match status" value="1"/>
</dbReference>
<dbReference type="Pfam" id="PF14697">
    <property type="entry name" value="Fer4_21"/>
    <property type="match status" value="1"/>
</dbReference>
<dbReference type="SUPFAM" id="SSF54862">
    <property type="entry name" value="4Fe-4S ferredoxins"/>
    <property type="match status" value="1"/>
</dbReference>
<dbReference type="PROSITE" id="PS00198">
    <property type="entry name" value="4FE4S_FER_1"/>
    <property type="match status" value="2"/>
</dbReference>
<dbReference type="PROSITE" id="PS51379">
    <property type="entry name" value="4FE4S_FER_2"/>
    <property type="match status" value="2"/>
</dbReference>
<comment type="function">
    <text evidence="2">Apoprotein for the two 4Fe-4S centers FA and FB of photosystem I (PSI); essential for photochemical activity. FB is the terminal electron acceptor of PSI, donating electrons to ferredoxin. The C-terminus interacts with PsaA/B/D and helps assemble the protein into the PSI complex. Required for binding of PsaD and PsaE to PSI. PSI is a plastocyanin-ferredoxin oxidoreductase, converting photonic excitation into a charge separation, which transfers an electron from the donor P700 chlorophyll pair to the spectroscopically characterized acceptors A0, A1, FX, FA and FB in turn.</text>
</comment>
<comment type="catalytic activity">
    <reaction evidence="2">
        <text>reduced [plastocyanin] + hnu + oxidized [2Fe-2S]-[ferredoxin] = oxidized [plastocyanin] + reduced [2Fe-2S]-[ferredoxin]</text>
        <dbReference type="Rhea" id="RHEA:30407"/>
        <dbReference type="Rhea" id="RHEA-COMP:10000"/>
        <dbReference type="Rhea" id="RHEA-COMP:10001"/>
        <dbReference type="Rhea" id="RHEA-COMP:10039"/>
        <dbReference type="Rhea" id="RHEA-COMP:10040"/>
        <dbReference type="ChEBI" id="CHEBI:29036"/>
        <dbReference type="ChEBI" id="CHEBI:30212"/>
        <dbReference type="ChEBI" id="CHEBI:33737"/>
        <dbReference type="ChEBI" id="CHEBI:33738"/>
        <dbReference type="ChEBI" id="CHEBI:49552"/>
        <dbReference type="EC" id="1.97.1.12"/>
    </reaction>
</comment>
<comment type="cofactor">
    <cofactor evidence="2">
        <name>[4Fe-4S] cluster</name>
        <dbReference type="ChEBI" id="CHEBI:49883"/>
    </cofactor>
    <text evidence="2">Binds 2 [4Fe-4S] clusters. Cluster 2 is most probably the spectroscopically characterized electron acceptor FA and cluster 1 is most probably FB.</text>
</comment>
<comment type="subunit">
    <text evidence="2">The eukaryotic PSI reaction center is composed of at least 11 subunits.</text>
</comment>
<comment type="subcellular location">
    <subcellularLocation>
        <location evidence="1">Plastid thylakoid membrane</location>
        <topology evidence="2">Peripheral membrane protein</topology>
        <orientation evidence="2">Stromal side</orientation>
    </subcellularLocation>
</comment>
<comment type="caution">
    <text evidence="3">Only inflorescences, fruits, starved seedlings and stressed stem tips are green in this organism.</text>
</comment>
<organism>
    <name type="scientific">Cuscuta obtusiflora</name>
    <name type="common">Peruvian dodder</name>
    <dbReference type="NCBI Taxonomy" id="437280"/>
    <lineage>
        <taxon>Eukaryota</taxon>
        <taxon>Viridiplantae</taxon>
        <taxon>Streptophyta</taxon>
        <taxon>Embryophyta</taxon>
        <taxon>Tracheophyta</taxon>
        <taxon>Spermatophyta</taxon>
        <taxon>Magnoliopsida</taxon>
        <taxon>eudicotyledons</taxon>
        <taxon>Gunneridae</taxon>
        <taxon>Pentapetalae</taxon>
        <taxon>asterids</taxon>
        <taxon>lamiids</taxon>
        <taxon>Solanales</taxon>
        <taxon>Convolvulaceae</taxon>
        <taxon>Cuscuteae</taxon>
        <taxon>Cuscuta</taxon>
        <taxon>Cuscuta subgen. Grammica</taxon>
        <taxon>Cuscuta sect. Cleistogrammica</taxon>
    </lineage>
</organism>